<gene>
    <name type="primary">SNT309</name>
    <name type="ordered locus">CAGL0G01848g</name>
</gene>
<reference key="1">
    <citation type="journal article" date="2004" name="Nature">
        <title>Genome evolution in yeasts.</title>
        <authorList>
            <person name="Dujon B."/>
            <person name="Sherman D."/>
            <person name="Fischer G."/>
            <person name="Durrens P."/>
            <person name="Casaregola S."/>
            <person name="Lafontaine I."/>
            <person name="de Montigny J."/>
            <person name="Marck C."/>
            <person name="Neuveglise C."/>
            <person name="Talla E."/>
            <person name="Goffard N."/>
            <person name="Frangeul L."/>
            <person name="Aigle M."/>
            <person name="Anthouard V."/>
            <person name="Babour A."/>
            <person name="Barbe V."/>
            <person name="Barnay S."/>
            <person name="Blanchin S."/>
            <person name="Beckerich J.-M."/>
            <person name="Beyne E."/>
            <person name="Bleykasten C."/>
            <person name="Boisrame A."/>
            <person name="Boyer J."/>
            <person name="Cattolico L."/>
            <person name="Confanioleri F."/>
            <person name="de Daruvar A."/>
            <person name="Despons L."/>
            <person name="Fabre E."/>
            <person name="Fairhead C."/>
            <person name="Ferry-Dumazet H."/>
            <person name="Groppi A."/>
            <person name="Hantraye F."/>
            <person name="Hennequin C."/>
            <person name="Jauniaux N."/>
            <person name="Joyet P."/>
            <person name="Kachouri R."/>
            <person name="Kerrest A."/>
            <person name="Koszul R."/>
            <person name="Lemaire M."/>
            <person name="Lesur I."/>
            <person name="Ma L."/>
            <person name="Muller H."/>
            <person name="Nicaud J.-M."/>
            <person name="Nikolski M."/>
            <person name="Oztas S."/>
            <person name="Ozier-Kalogeropoulos O."/>
            <person name="Pellenz S."/>
            <person name="Potier S."/>
            <person name="Richard G.-F."/>
            <person name="Straub M.-L."/>
            <person name="Suleau A."/>
            <person name="Swennen D."/>
            <person name="Tekaia F."/>
            <person name="Wesolowski-Louvel M."/>
            <person name="Westhof E."/>
            <person name="Wirth B."/>
            <person name="Zeniou-Meyer M."/>
            <person name="Zivanovic Y."/>
            <person name="Bolotin-Fukuhara M."/>
            <person name="Thierry A."/>
            <person name="Bouchier C."/>
            <person name="Caudron B."/>
            <person name="Scarpelli C."/>
            <person name="Gaillardin C."/>
            <person name="Weissenbach J."/>
            <person name="Wincker P."/>
            <person name="Souciet J.-L."/>
        </authorList>
    </citation>
    <scope>NUCLEOTIDE SEQUENCE [LARGE SCALE GENOMIC DNA]</scope>
    <source>
        <strain>ATCC 2001 / BCRC 20586 / JCM 3761 / NBRC 0622 / NRRL Y-65 / CBS 138</strain>
    </source>
</reference>
<name>SN309_CANGA</name>
<protein>
    <recommendedName>
        <fullName>Pre-mRNA-splicing factor SNT309</fullName>
    </recommendedName>
</protein>
<organism>
    <name type="scientific">Candida glabrata (strain ATCC 2001 / BCRC 20586 / JCM 3761 / NBRC 0622 / NRRL Y-65 / CBS 138)</name>
    <name type="common">Yeast</name>
    <name type="synonym">Nakaseomyces glabratus</name>
    <dbReference type="NCBI Taxonomy" id="284593"/>
    <lineage>
        <taxon>Eukaryota</taxon>
        <taxon>Fungi</taxon>
        <taxon>Dikarya</taxon>
        <taxon>Ascomycota</taxon>
        <taxon>Saccharomycotina</taxon>
        <taxon>Saccharomycetes</taxon>
        <taxon>Saccharomycetales</taxon>
        <taxon>Saccharomycetaceae</taxon>
        <taxon>Nakaseomyces</taxon>
    </lineage>
</organism>
<proteinExistence type="inferred from homology"/>
<comment type="function">
    <text evidence="1">Involved in pre-mRNA splicing.</text>
</comment>
<comment type="subunit">
    <text evidence="1">Associated with the spliceosome.</text>
</comment>
<comment type="subcellular location">
    <subcellularLocation>
        <location evidence="1">Nucleus</location>
    </subcellularLocation>
</comment>
<feature type="chain" id="PRO_0000071998" description="Pre-mRNA-splicing factor SNT309">
    <location>
        <begin position="1"/>
        <end position="156"/>
    </location>
</feature>
<evidence type="ECO:0000250" key="1"/>
<accession>Q6FTK3</accession>
<dbReference type="EMBL" id="CR380953">
    <property type="protein sequence ID" value="CAG59368.1"/>
    <property type="molecule type" value="Genomic_DNA"/>
</dbReference>
<dbReference type="RefSeq" id="XP_446441.1">
    <property type="nucleotide sequence ID" value="XM_446441.1"/>
</dbReference>
<dbReference type="SMR" id="Q6FTK3"/>
<dbReference type="FunCoup" id="Q6FTK3">
    <property type="interactions" value="170"/>
</dbReference>
<dbReference type="STRING" id="284593.Q6FTK3"/>
<dbReference type="EnsemblFungi" id="CAGL0G01848g-T">
    <property type="protein sequence ID" value="CAGL0G01848g-T-p1"/>
    <property type="gene ID" value="CAGL0G01848g"/>
</dbReference>
<dbReference type="KEGG" id="cgr:2888198"/>
<dbReference type="CGD" id="CAL0130135">
    <property type="gene designation" value="CAGL0G01848g"/>
</dbReference>
<dbReference type="VEuPathDB" id="FungiDB:CAGL0G01848g"/>
<dbReference type="HOGENOM" id="CLU_119596_0_0_1"/>
<dbReference type="InParanoid" id="Q6FTK3"/>
<dbReference type="Proteomes" id="UP000002428">
    <property type="component" value="Chromosome G"/>
</dbReference>
<dbReference type="GO" id="GO:0005681">
    <property type="term" value="C:spliceosomal complex"/>
    <property type="evidence" value="ECO:0007669"/>
    <property type="project" value="UniProtKB-KW"/>
</dbReference>
<dbReference type="GO" id="GO:0006397">
    <property type="term" value="P:mRNA processing"/>
    <property type="evidence" value="ECO:0007669"/>
    <property type="project" value="UniProtKB-KW"/>
</dbReference>
<dbReference type="GO" id="GO:0008380">
    <property type="term" value="P:RNA splicing"/>
    <property type="evidence" value="ECO:0007669"/>
    <property type="project" value="UniProtKB-KW"/>
</dbReference>
<keyword id="KW-0507">mRNA processing</keyword>
<keyword id="KW-0508">mRNA splicing</keyword>
<keyword id="KW-0539">Nucleus</keyword>
<keyword id="KW-1185">Reference proteome</keyword>
<keyword id="KW-0747">Spliceosome</keyword>
<sequence length="156" mass="17683">METYLPFVDDAAVDQAFEAWVDELVEEECGAMPSEGYHPEVPRVMAAKGRDAESGGIDLARYNDAGDVRLLKIVDSYLRHAEITLRELISKTIVNQWVISNDCQQSASGVMQAGIDKLQGQLDALEKYRRDVQVRYRRTHPDTVDASCMRLRDMYI</sequence>